<sequence>MALNLQDKQAIVAEVNEVAKGALSAVVADSRGVTVDKMTELRKAGREAGVYMRVVRNTLMRRVVEGTPFECLKDTFVGPTLIAFSHEHPGAAARLFKDFAKANAKFEIKAAAFEGEMIPAAQIDRLATLPTYDEAIARLMATMKEAAAGKLVRTLAALRDQKEAA</sequence>
<reference key="1">
    <citation type="submission" date="2007-09" db="EMBL/GenBank/DDBJ databases">
        <title>Complete sequence of chromosome of Serratia proteamaculans 568.</title>
        <authorList>
            <consortium name="US DOE Joint Genome Institute"/>
            <person name="Copeland A."/>
            <person name="Lucas S."/>
            <person name="Lapidus A."/>
            <person name="Barry K."/>
            <person name="Glavina del Rio T."/>
            <person name="Dalin E."/>
            <person name="Tice H."/>
            <person name="Pitluck S."/>
            <person name="Chain P."/>
            <person name="Malfatti S."/>
            <person name="Shin M."/>
            <person name="Vergez L."/>
            <person name="Schmutz J."/>
            <person name="Larimer F."/>
            <person name="Land M."/>
            <person name="Hauser L."/>
            <person name="Kyrpides N."/>
            <person name="Kim E."/>
            <person name="Taghavi S."/>
            <person name="Newman L."/>
            <person name="Vangronsveld J."/>
            <person name="van der Lelie D."/>
            <person name="Richardson P."/>
        </authorList>
    </citation>
    <scope>NUCLEOTIDE SEQUENCE [LARGE SCALE GENOMIC DNA]</scope>
    <source>
        <strain>568</strain>
    </source>
</reference>
<evidence type="ECO:0000255" key="1">
    <source>
        <dbReference type="HAMAP-Rule" id="MF_00362"/>
    </source>
</evidence>
<evidence type="ECO:0000305" key="2"/>
<accession>A8G8E5</accession>
<proteinExistence type="inferred from homology"/>
<protein>
    <recommendedName>
        <fullName evidence="1">Large ribosomal subunit protein uL10</fullName>
    </recommendedName>
    <alternativeName>
        <fullName evidence="2">50S ribosomal protein L10</fullName>
    </alternativeName>
</protein>
<feature type="chain" id="PRO_1000059892" description="Large ribosomal subunit protein uL10">
    <location>
        <begin position="1"/>
        <end position="165"/>
    </location>
</feature>
<name>RL10_SERP5</name>
<gene>
    <name evidence="1" type="primary">rplJ</name>
    <name type="ordered locus">Spro_0275</name>
</gene>
<keyword id="KW-0687">Ribonucleoprotein</keyword>
<keyword id="KW-0689">Ribosomal protein</keyword>
<keyword id="KW-0694">RNA-binding</keyword>
<keyword id="KW-0699">rRNA-binding</keyword>
<comment type="function">
    <text evidence="1">Forms part of the ribosomal stalk, playing a central role in the interaction of the ribosome with GTP-bound translation factors.</text>
</comment>
<comment type="subunit">
    <text evidence="1">Part of the ribosomal stalk of the 50S ribosomal subunit. The N-terminus interacts with L11 and the large rRNA to form the base of the stalk. The C-terminus forms an elongated spine to which L12 dimers bind in a sequential fashion forming a multimeric L10(L12)X complex.</text>
</comment>
<comment type="similarity">
    <text evidence="1">Belongs to the universal ribosomal protein uL10 family.</text>
</comment>
<organism>
    <name type="scientific">Serratia proteamaculans (strain 568)</name>
    <dbReference type="NCBI Taxonomy" id="399741"/>
    <lineage>
        <taxon>Bacteria</taxon>
        <taxon>Pseudomonadati</taxon>
        <taxon>Pseudomonadota</taxon>
        <taxon>Gammaproteobacteria</taxon>
        <taxon>Enterobacterales</taxon>
        <taxon>Yersiniaceae</taxon>
        <taxon>Serratia</taxon>
    </lineage>
</organism>
<dbReference type="EMBL" id="CP000826">
    <property type="protein sequence ID" value="ABV39385.1"/>
    <property type="molecule type" value="Genomic_DNA"/>
</dbReference>
<dbReference type="STRING" id="399741.Spro_0275"/>
<dbReference type="KEGG" id="spe:Spro_0275"/>
<dbReference type="eggNOG" id="COG0244">
    <property type="taxonomic scope" value="Bacteria"/>
</dbReference>
<dbReference type="HOGENOM" id="CLU_092227_0_2_6"/>
<dbReference type="OrthoDB" id="9808307at2"/>
<dbReference type="GO" id="GO:0015934">
    <property type="term" value="C:large ribosomal subunit"/>
    <property type="evidence" value="ECO:0007669"/>
    <property type="project" value="InterPro"/>
</dbReference>
<dbReference type="GO" id="GO:0070180">
    <property type="term" value="F:large ribosomal subunit rRNA binding"/>
    <property type="evidence" value="ECO:0007669"/>
    <property type="project" value="UniProtKB-UniRule"/>
</dbReference>
<dbReference type="GO" id="GO:0003735">
    <property type="term" value="F:structural constituent of ribosome"/>
    <property type="evidence" value="ECO:0007669"/>
    <property type="project" value="InterPro"/>
</dbReference>
<dbReference type="GO" id="GO:0006412">
    <property type="term" value="P:translation"/>
    <property type="evidence" value="ECO:0007669"/>
    <property type="project" value="UniProtKB-UniRule"/>
</dbReference>
<dbReference type="CDD" id="cd05797">
    <property type="entry name" value="Ribosomal_L10"/>
    <property type="match status" value="1"/>
</dbReference>
<dbReference type="FunFam" id="3.30.70.1730:FF:000001">
    <property type="entry name" value="50S ribosomal protein L10"/>
    <property type="match status" value="1"/>
</dbReference>
<dbReference type="Gene3D" id="3.30.70.1730">
    <property type="match status" value="1"/>
</dbReference>
<dbReference type="Gene3D" id="6.10.250.2350">
    <property type="match status" value="1"/>
</dbReference>
<dbReference type="HAMAP" id="MF_00362">
    <property type="entry name" value="Ribosomal_uL10"/>
    <property type="match status" value="1"/>
</dbReference>
<dbReference type="InterPro" id="IPR001790">
    <property type="entry name" value="Ribosomal_uL10"/>
</dbReference>
<dbReference type="InterPro" id="IPR043141">
    <property type="entry name" value="Ribosomal_uL10-like_sf"/>
</dbReference>
<dbReference type="InterPro" id="IPR022973">
    <property type="entry name" value="Ribosomal_uL10_bac"/>
</dbReference>
<dbReference type="InterPro" id="IPR047865">
    <property type="entry name" value="Ribosomal_uL10_bac_type"/>
</dbReference>
<dbReference type="InterPro" id="IPR002363">
    <property type="entry name" value="Ribosomal_uL10_CS_bac"/>
</dbReference>
<dbReference type="NCBIfam" id="NF000955">
    <property type="entry name" value="PRK00099.1-1"/>
    <property type="match status" value="1"/>
</dbReference>
<dbReference type="PANTHER" id="PTHR11560">
    <property type="entry name" value="39S RIBOSOMAL PROTEIN L10, MITOCHONDRIAL"/>
    <property type="match status" value="1"/>
</dbReference>
<dbReference type="Pfam" id="PF00466">
    <property type="entry name" value="Ribosomal_L10"/>
    <property type="match status" value="1"/>
</dbReference>
<dbReference type="SUPFAM" id="SSF160369">
    <property type="entry name" value="Ribosomal protein L10-like"/>
    <property type="match status" value="1"/>
</dbReference>
<dbReference type="PROSITE" id="PS01109">
    <property type="entry name" value="RIBOSOMAL_L10"/>
    <property type="match status" value="1"/>
</dbReference>